<reference key="1">
    <citation type="journal article" date="1995" name="Virology">
        <title>Analysis of the complete nucleotide sequence of African swine fever virus.</title>
        <authorList>
            <person name="Yanez R.J."/>
            <person name="Rodriguez J.M."/>
            <person name="Nogal M.L."/>
            <person name="Yuste L."/>
            <person name="Enriquez C."/>
            <person name="Rodriguez J.F."/>
            <person name="Vinuela E."/>
        </authorList>
    </citation>
    <scope>NUCLEOTIDE SEQUENCE [LARGE SCALE GENOMIC DNA]</scope>
</reference>
<reference key="2">
    <citation type="journal article" date="1997" name="J. Biol. Chem.">
        <title>African swine fever virus trans-prenyltransferase.</title>
        <authorList>
            <person name="Alejo A."/>
            <person name="Yanez R.J."/>
            <person name="Rodriguez J.M."/>
            <person name="Vinuela E."/>
            <person name="Salas M.L."/>
        </authorList>
    </citation>
    <scope>CHARACTERIZATION</scope>
    <scope>SUBCELLULAR LOCATION</scope>
</reference>
<reference key="3">
    <citation type="journal article" date="2020" name="J. Virol.">
        <title>The African Swine Fever Virus Transcriptome.</title>
        <authorList>
            <person name="Cackett G."/>
            <person name="Matelska D."/>
            <person name="Sykora M."/>
            <person name="Portugal R."/>
            <person name="Malecki M."/>
            <person name="Baehler J."/>
            <person name="Dixon L."/>
            <person name="Werner F."/>
        </authorList>
    </citation>
    <scope>INDUCTION</scope>
</reference>
<sequence>MLHLIYISIIVVLIIILISYTRKPKYFRITAPRSVALFHGIHPLNPKNYKTFSKEFETILNNAIEDGDFKGQLTEPCSYALRGGKYIRPIILMEIVRACQLQHSFGAPIYPAEAALAVEYFHVASLIIDDMPSFDNDVKRRNKDTVWARFGVAKAQMSALALTMQGFQNICRQIDWIKEHCPRFPDPNQLGALLCTFVSHSLNSAGSGQLVDTPEKTIPFFKIAFIMGWVLGTGTIEDIGMIERAAHCFGHAFQLADDIKDHDTDTGWNYAKIHGKQKTFDDVAQSLQECKKILHGKKIFTSIWNEIFQKVINVALGT</sequence>
<feature type="chain" id="PRO_0000373156" description="Trans-prenyltransferase">
    <location>
        <begin position="1"/>
        <end position="318"/>
    </location>
</feature>
<feature type="transmembrane region" description="Helical" evidence="4">
    <location>
        <begin position="1"/>
        <end position="21"/>
    </location>
</feature>
<feature type="binding site" evidence="2">
    <location>
        <position position="85"/>
    </location>
    <ligand>
        <name>isopentenyl diphosphate</name>
        <dbReference type="ChEBI" id="CHEBI:128769"/>
    </ligand>
</feature>
<feature type="binding site" evidence="2">
    <location>
        <position position="88"/>
    </location>
    <ligand>
        <name>isopentenyl diphosphate</name>
        <dbReference type="ChEBI" id="CHEBI:128769"/>
    </ligand>
</feature>
<feature type="binding site" evidence="3">
    <location>
        <position position="122"/>
    </location>
    <ligand>
        <name>isopentenyl diphosphate</name>
        <dbReference type="ChEBI" id="CHEBI:128769"/>
    </ligand>
</feature>
<feature type="binding site" evidence="2">
    <location>
        <position position="129"/>
    </location>
    <ligand>
        <name>Mg(2+)</name>
        <dbReference type="ChEBI" id="CHEBI:18420"/>
        <label>1</label>
    </ligand>
</feature>
<feature type="binding site" evidence="2">
    <location>
        <position position="129"/>
    </location>
    <ligand>
        <name>Mg(2+)</name>
        <dbReference type="ChEBI" id="CHEBI:18420"/>
        <label>2</label>
    </ligand>
</feature>
<feature type="binding site" evidence="2">
    <location>
        <position position="135"/>
    </location>
    <ligand>
        <name>Mg(2+)</name>
        <dbReference type="ChEBI" id="CHEBI:18420"/>
        <label>1</label>
    </ligand>
</feature>
<feature type="binding site" evidence="2">
    <location>
        <position position="135"/>
    </location>
    <ligand>
        <name>Mg(2+)</name>
        <dbReference type="ChEBI" id="CHEBI:18420"/>
        <label>2</label>
    </ligand>
</feature>
<feature type="binding site" evidence="1">
    <location>
        <position position="140"/>
    </location>
    <ligand>
        <name>dimethylallyl diphosphate</name>
        <dbReference type="ChEBI" id="CHEBI:57623"/>
    </ligand>
</feature>
<feature type="binding site" evidence="2">
    <location>
        <position position="141"/>
    </location>
    <ligand>
        <name>isopentenyl diphosphate</name>
        <dbReference type="ChEBI" id="CHEBI:128769"/>
    </ligand>
</feature>
<feature type="binding site" evidence="1">
    <location>
        <position position="216"/>
    </location>
    <ligand>
        <name>dimethylallyl diphosphate</name>
        <dbReference type="ChEBI" id="CHEBI:57623"/>
    </ligand>
</feature>
<feature type="binding site" evidence="1">
    <location>
        <position position="217"/>
    </location>
    <ligand>
        <name>dimethylallyl diphosphate</name>
        <dbReference type="ChEBI" id="CHEBI:57623"/>
    </ligand>
</feature>
<feature type="binding site" evidence="1">
    <location>
        <position position="254"/>
    </location>
    <ligand>
        <name>dimethylallyl diphosphate</name>
        <dbReference type="ChEBI" id="CHEBI:57623"/>
    </ligand>
</feature>
<dbReference type="EC" id="2.5.1.-"/>
<dbReference type="EC" id="2.5.1.1"/>
<dbReference type="EC" id="2.5.1.29"/>
<dbReference type="EC" id="2.5.1.10"/>
<dbReference type="EMBL" id="U18466">
    <property type="protein sequence ID" value="AAA65304.1"/>
    <property type="molecule type" value="Genomic_DNA"/>
</dbReference>
<dbReference type="RefSeq" id="NP_042768.1">
    <property type="nucleotide sequence ID" value="NC_001659.2"/>
</dbReference>
<dbReference type="PDB" id="8HDL">
    <property type="method" value="X-ray"/>
    <property type="resolution" value="3.20 A"/>
    <property type="chains" value="A=31-318"/>
</dbReference>
<dbReference type="PDBsum" id="8HDL"/>
<dbReference type="SMR" id="Q65164"/>
<dbReference type="GeneID" id="22220304"/>
<dbReference type="KEGG" id="vg:22220304"/>
<dbReference type="UniPathway" id="UPA00259">
    <property type="reaction ID" value="UER00368"/>
</dbReference>
<dbReference type="UniPathway" id="UPA00260">
    <property type="reaction ID" value="UER00369"/>
</dbReference>
<dbReference type="UniPathway" id="UPA00389">
    <property type="reaction ID" value="UER00564"/>
</dbReference>
<dbReference type="Proteomes" id="UP000000624">
    <property type="component" value="Segment"/>
</dbReference>
<dbReference type="GO" id="GO:0044165">
    <property type="term" value="C:host cell endoplasmic reticulum"/>
    <property type="evidence" value="ECO:0007669"/>
    <property type="project" value="UniProtKB-SubCell"/>
</dbReference>
<dbReference type="GO" id="GO:0033644">
    <property type="term" value="C:host cell membrane"/>
    <property type="evidence" value="ECO:0007669"/>
    <property type="project" value="UniProtKB-SubCell"/>
</dbReference>
<dbReference type="GO" id="GO:0016020">
    <property type="term" value="C:membrane"/>
    <property type="evidence" value="ECO:0007669"/>
    <property type="project" value="UniProtKB-KW"/>
</dbReference>
<dbReference type="GO" id="GO:0004337">
    <property type="term" value="F:(2E,6E)-farnesyl diphosphate synthase activity"/>
    <property type="evidence" value="ECO:0007669"/>
    <property type="project" value="UniProtKB-EC"/>
</dbReference>
<dbReference type="GO" id="GO:0004161">
    <property type="term" value="F:dimethylallyltranstransferase activity"/>
    <property type="evidence" value="ECO:0007669"/>
    <property type="project" value="UniProtKB-EC"/>
</dbReference>
<dbReference type="GO" id="GO:0044687">
    <property type="term" value="F:geranylfarnesyl diphosphate synthase activity"/>
    <property type="evidence" value="ECO:0007669"/>
    <property type="project" value="RHEA"/>
</dbReference>
<dbReference type="GO" id="GO:0004311">
    <property type="term" value="F:geranylgeranyl diphosphate synthase activity"/>
    <property type="evidence" value="ECO:0007669"/>
    <property type="project" value="UniProtKB-EC"/>
</dbReference>
<dbReference type="GO" id="GO:0046872">
    <property type="term" value="F:metal ion binding"/>
    <property type="evidence" value="ECO:0007669"/>
    <property type="project" value="UniProtKB-KW"/>
</dbReference>
<dbReference type="GO" id="GO:0045337">
    <property type="term" value="P:farnesyl diphosphate biosynthetic process"/>
    <property type="evidence" value="ECO:0007669"/>
    <property type="project" value="UniProtKB-UniPathway"/>
</dbReference>
<dbReference type="GO" id="GO:0033384">
    <property type="term" value="P:geranyl diphosphate biosynthetic process"/>
    <property type="evidence" value="ECO:0007669"/>
    <property type="project" value="UniProtKB-UniPathway"/>
</dbReference>
<dbReference type="GO" id="GO:0033386">
    <property type="term" value="P:geranylgeranyl diphosphate biosynthetic process"/>
    <property type="evidence" value="ECO:0007669"/>
    <property type="project" value="UniProtKB-UniPathway"/>
</dbReference>
<dbReference type="Gene3D" id="1.10.600.10">
    <property type="entry name" value="Farnesyl Diphosphate Synthase"/>
    <property type="match status" value="1"/>
</dbReference>
<dbReference type="InterPro" id="IPR008949">
    <property type="entry name" value="Isoprenoid_synthase_dom_sf"/>
</dbReference>
<dbReference type="InterPro" id="IPR000092">
    <property type="entry name" value="Polyprenyl_synt"/>
</dbReference>
<dbReference type="PANTHER" id="PTHR43281">
    <property type="entry name" value="FARNESYL DIPHOSPHATE SYNTHASE"/>
    <property type="match status" value="1"/>
</dbReference>
<dbReference type="PANTHER" id="PTHR43281:SF1">
    <property type="entry name" value="FARNESYL DIPHOSPHATE SYNTHASE"/>
    <property type="match status" value="1"/>
</dbReference>
<dbReference type="Pfam" id="PF00348">
    <property type="entry name" value="polyprenyl_synt"/>
    <property type="match status" value="1"/>
</dbReference>
<dbReference type="SUPFAM" id="SSF48576">
    <property type="entry name" value="Terpenoid synthases"/>
    <property type="match status" value="1"/>
</dbReference>
<dbReference type="PROSITE" id="PS00444">
    <property type="entry name" value="POLYPRENYL_SYNTHASE_2"/>
    <property type="match status" value="1"/>
</dbReference>
<accession>Q65164</accession>
<gene>
    <name type="ordered locus">Ba71V-074</name>
    <name type="ORF">B318L</name>
</gene>
<protein>
    <recommendedName>
        <fullName>Trans-prenyltransferase</fullName>
        <ecNumber>2.5.1.-</ecNumber>
    </recommendedName>
    <alternativeName>
        <fullName>(2E,6E)-farnesyl diphosphate synthase</fullName>
    </alternativeName>
    <alternativeName>
        <fullName>Dimethylallyltranstransferase</fullName>
        <ecNumber>2.5.1.1</ecNumber>
    </alternativeName>
    <alternativeName>
        <fullName>Farnesyl diphosphate synthase</fullName>
    </alternativeName>
    <alternativeName>
        <fullName>Farnesyltranstransferase</fullName>
        <ecNumber>2.5.1.29</ecNumber>
    </alternativeName>
    <alternativeName>
        <fullName>Geranyltranstransferase</fullName>
        <ecNumber>2.5.1.10</ecNumber>
    </alternativeName>
    <alternativeName>
        <fullName>Polyprenyl-diphosphate synthase</fullName>
    </alternativeName>
</protein>
<organism>
    <name type="scientific">African swine fever virus (strain Badajoz 1971 Vero-adapted)</name>
    <name type="common">Ba71V</name>
    <name type="synonym">ASFV</name>
    <dbReference type="NCBI Taxonomy" id="10498"/>
    <lineage>
        <taxon>Viruses</taxon>
        <taxon>Varidnaviria</taxon>
        <taxon>Bamfordvirae</taxon>
        <taxon>Nucleocytoviricota</taxon>
        <taxon>Pokkesviricetes</taxon>
        <taxon>Asfuvirales</taxon>
        <taxon>Asfarviridae</taxon>
        <taxon>Asfivirus</taxon>
        <taxon>African swine fever virus</taxon>
    </lineage>
</organism>
<evidence type="ECO:0000250" key="1"/>
<evidence type="ECO:0000250" key="2">
    <source>
        <dbReference type="UniProtKB" id="P14324"/>
    </source>
</evidence>
<evidence type="ECO:0000250" key="3">
    <source>
        <dbReference type="UniProtKB" id="Q12051"/>
    </source>
</evidence>
<evidence type="ECO:0000255" key="4"/>
<evidence type="ECO:0000269" key="5">
    <source>
    </source>
</evidence>
<evidence type="ECO:0000269" key="6">
    <source>
    </source>
</evidence>
<evidence type="ECO:0000305" key="7"/>
<organismHost>
    <name type="scientific">Ornithodoros</name>
    <name type="common">relapsing fever ticks</name>
    <dbReference type="NCBI Taxonomy" id="6937"/>
</organismHost>
<organismHost>
    <name type="scientific">Sus scrofa</name>
    <name type="common">Pig</name>
    <dbReference type="NCBI Taxonomy" id="9823"/>
</organismHost>
<proteinExistence type="evidence at protein level"/>
<keyword id="KW-0002">3D-structure</keyword>
<keyword id="KW-1038">Host endoplasmic reticulum</keyword>
<keyword id="KW-1043">Host membrane</keyword>
<keyword id="KW-0414">Isoprene biosynthesis</keyword>
<keyword id="KW-0426">Late protein</keyword>
<keyword id="KW-0460">Magnesium</keyword>
<keyword id="KW-0472">Membrane</keyword>
<keyword id="KW-0479">Metal-binding</keyword>
<keyword id="KW-1185">Reference proteome</keyword>
<keyword id="KW-0808">Transferase</keyword>
<keyword id="KW-0812">Transmembrane</keyword>
<keyword id="KW-1133">Transmembrane helix</keyword>
<comment type="function">
    <text>Trans-prenyltransferase that catalyzes the sequential condensation of isopentenyl diphosphate (IPP) with different allylic diphosphates, such as dimethylallyl diphosphate (DMAPP), geranyl diphosphate (GPP), farnesyl diphosphate (FPP) and geranylgeranyl diphosphate (GGPP), farnesyl diphosphate being the best allylic substrate.</text>
</comment>
<comment type="catalytic activity">
    <reaction>
        <text>isopentenyl diphosphate + dimethylallyl diphosphate = (2E)-geranyl diphosphate + diphosphate</text>
        <dbReference type="Rhea" id="RHEA:22408"/>
        <dbReference type="ChEBI" id="CHEBI:33019"/>
        <dbReference type="ChEBI" id="CHEBI:57623"/>
        <dbReference type="ChEBI" id="CHEBI:58057"/>
        <dbReference type="ChEBI" id="CHEBI:128769"/>
        <dbReference type="EC" id="2.5.1.1"/>
    </reaction>
</comment>
<comment type="catalytic activity">
    <reaction>
        <text>isopentenyl diphosphate + (2E)-geranyl diphosphate = (2E,6E)-farnesyl diphosphate + diphosphate</text>
        <dbReference type="Rhea" id="RHEA:19361"/>
        <dbReference type="ChEBI" id="CHEBI:33019"/>
        <dbReference type="ChEBI" id="CHEBI:58057"/>
        <dbReference type="ChEBI" id="CHEBI:128769"/>
        <dbReference type="ChEBI" id="CHEBI:175763"/>
        <dbReference type="EC" id="2.5.1.10"/>
    </reaction>
</comment>
<comment type="catalytic activity">
    <reaction>
        <text>isopentenyl diphosphate + (2E,6E)-farnesyl diphosphate = (2E,6E,10E)-geranylgeranyl diphosphate + diphosphate</text>
        <dbReference type="Rhea" id="RHEA:17653"/>
        <dbReference type="ChEBI" id="CHEBI:33019"/>
        <dbReference type="ChEBI" id="CHEBI:58756"/>
        <dbReference type="ChEBI" id="CHEBI:128769"/>
        <dbReference type="ChEBI" id="CHEBI:175763"/>
        <dbReference type="EC" id="2.5.1.29"/>
    </reaction>
</comment>
<comment type="catalytic activity">
    <reaction>
        <text>isopentenyl diphosphate + (2E,6E,10E)-geranylgeranyl diphosphate = (2E,6E,10E,14E)-geranylfarnesyl diphosphate + diphosphate</text>
        <dbReference type="Rhea" id="RHEA:25694"/>
        <dbReference type="ChEBI" id="CHEBI:33019"/>
        <dbReference type="ChEBI" id="CHEBI:57907"/>
        <dbReference type="ChEBI" id="CHEBI:58756"/>
        <dbReference type="ChEBI" id="CHEBI:128769"/>
    </reaction>
</comment>
<comment type="cofactor">
    <cofactor evidence="1">
        <name>Mg(2+)</name>
        <dbReference type="ChEBI" id="CHEBI:18420"/>
    </cofactor>
    <text evidence="1">Binds 2 Mg(2+) ions per subunit.</text>
</comment>
<comment type="pathway">
    <text>Isoprenoid biosynthesis; farnesyl diphosphate biosynthesis; farnesyl diphosphate from geranyl diphosphate and isopentenyl diphosphate: step 1/1.</text>
</comment>
<comment type="pathway">
    <text>Isoprenoid biosynthesis; geranyl diphosphate biosynthesis; geranyl diphosphate from dimethylallyl diphosphate and isopentenyl diphosphate: step 1/1.</text>
</comment>
<comment type="pathway">
    <text>Isoprenoid biosynthesis; geranylgeranyl diphosphate biosynthesis; geranylgeranyl diphosphate from farnesyl diphosphate and isopentenyl diphosphate: step 1/1.</text>
</comment>
<comment type="subcellular location">
    <subcellularLocation>
        <location evidence="6">Host endoplasmic reticulum</location>
    </subcellularLocation>
    <subcellularLocation>
        <location evidence="6">Host membrane</location>
        <topology evidence="6">Single-pass membrane protein</topology>
    </subcellularLocation>
</comment>
<comment type="induction">
    <text evidence="5">Expressed in the late phase of the viral replicative cycle.</text>
</comment>
<comment type="similarity">
    <text evidence="7">Belongs to the FPP/GGPP synthase family. Asfivirus trans-prenyltransferase subfamily.</text>
</comment>
<name>TPRT_ASFB7</name>